<evidence type="ECO:0000255" key="1">
    <source>
        <dbReference type="HAMAP-Rule" id="MF_01699"/>
    </source>
</evidence>
<reference key="1">
    <citation type="journal article" date="2010" name="Stand. Genomic Sci.">
        <title>Complete genome sequence of Haliangium ochraceum type strain (SMP-2).</title>
        <authorList>
            <person name="Ivanova N."/>
            <person name="Daum C."/>
            <person name="Lang E."/>
            <person name="Abt B."/>
            <person name="Kopitz M."/>
            <person name="Saunders E."/>
            <person name="Lapidus A."/>
            <person name="Lucas S."/>
            <person name="Glavina Del Rio T."/>
            <person name="Nolan M."/>
            <person name="Tice H."/>
            <person name="Copeland A."/>
            <person name="Cheng J.F."/>
            <person name="Chen F."/>
            <person name="Bruce D."/>
            <person name="Goodwin L."/>
            <person name="Pitluck S."/>
            <person name="Mavromatis K."/>
            <person name="Pati A."/>
            <person name="Mikhailova N."/>
            <person name="Chen A."/>
            <person name="Palaniappan K."/>
            <person name="Land M."/>
            <person name="Hauser L."/>
            <person name="Chang Y.J."/>
            <person name="Jeffries C.D."/>
            <person name="Detter J.C."/>
            <person name="Brettin T."/>
            <person name="Rohde M."/>
            <person name="Goker M."/>
            <person name="Bristow J."/>
            <person name="Markowitz V."/>
            <person name="Eisen J.A."/>
            <person name="Hugenholtz P."/>
            <person name="Kyrpides N.C."/>
            <person name="Klenk H.P."/>
        </authorList>
    </citation>
    <scope>NUCLEOTIDE SEQUENCE [LARGE SCALE GENOMIC DNA]</scope>
    <source>
        <strain>DSM 14365 / CIP 107738 / JCM 11303 / AJ 13395 / SMP-2</strain>
    </source>
</reference>
<gene>
    <name evidence="1" type="primary">rutA</name>
    <name type="ordered locus">Hoch_3938</name>
</gene>
<accession>D0LI58</accession>
<proteinExistence type="inferred from homology"/>
<dbReference type="EC" id="1.14.99.46" evidence="1"/>
<dbReference type="EMBL" id="CP001804">
    <property type="protein sequence ID" value="ACY16437.1"/>
    <property type="molecule type" value="Genomic_DNA"/>
</dbReference>
<dbReference type="RefSeq" id="WP_012829036.1">
    <property type="nucleotide sequence ID" value="NC_013440.1"/>
</dbReference>
<dbReference type="SMR" id="D0LI58"/>
<dbReference type="STRING" id="502025.Hoch_3938"/>
<dbReference type="KEGG" id="hoh:Hoch_3938"/>
<dbReference type="eggNOG" id="COG2141">
    <property type="taxonomic scope" value="Bacteria"/>
</dbReference>
<dbReference type="HOGENOM" id="CLU_027853_1_1_7"/>
<dbReference type="OrthoDB" id="9814695at2"/>
<dbReference type="Proteomes" id="UP000001880">
    <property type="component" value="Chromosome"/>
</dbReference>
<dbReference type="GO" id="GO:0008726">
    <property type="term" value="F:alkanesulfonate monooxygenase activity"/>
    <property type="evidence" value="ECO:0007669"/>
    <property type="project" value="TreeGrafter"/>
</dbReference>
<dbReference type="GO" id="GO:0052614">
    <property type="term" value="F:uracil oxygenase activity"/>
    <property type="evidence" value="ECO:0007669"/>
    <property type="project" value="UniProtKB-EC"/>
</dbReference>
<dbReference type="GO" id="GO:0046306">
    <property type="term" value="P:alkanesulfonate catabolic process"/>
    <property type="evidence" value="ECO:0007669"/>
    <property type="project" value="TreeGrafter"/>
</dbReference>
<dbReference type="GO" id="GO:0019740">
    <property type="term" value="P:nitrogen utilization"/>
    <property type="evidence" value="ECO:0007669"/>
    <property type="project" value="UniProtKB-UniRule"/>
</dbReference>
<dbReference type="GO" id="GO:0006212">
    <property type="term" value="P:uracil catabolic process"/>
    <property type="evidence" value="ECO:0007669"/>
    <property type="project" value="UniProtKB-UniRule"/>
</dbReference>
<dbReference type="CDD" id="cd01094">
    <property type="entry name" value="Alkanesulfonate_monoxygenase"/>
    <property type="match status" value="1"/>
</dbReference>
<dbReference type="Gene3D" id="3.20.20.30">
    <property type="entry name" value="Luciferase-like domain"/>
    <property type="match status" value="1"/>
</dbReference>
<dbReference type="HAMAP" id="MF_01699">
    <property type="entry name" value="RutA"/>
    <property type="match status" value="1"/>
</dbReference>
<dbReference type="InterPro" id="IPR011251">
    <property type="entry name" value="Luciferase-like_dom"/>
</dbReference>
<dbReference type="InterPro" id="IPR036661">
    <property type="entry name" value="Luciferase-like_sf"/>
</dbReference>
<dbReference type="InterPro" id="IPR019914">
    <property type="entry name" value="Pyrimidine_monooxygenase_RutA"/>
</dbReference>
<dbReference type="InterPro" id="IPR050172">
    <property type="entry name" value="SsuD_RutA_monooxygenase"/>
</dbReference>
<dbReference type="NCBIfam" id="TIGR03612">
    <property type="entry name" value="RutA"/>
    <property type="match status" value="1"/>
</dbReference>
<dbReference type="PANTHER" id="PTHR42847">
    <property type="entry name" value="ALKANESULFONATE MONOOXYGENASE"/>
    <property type="match status" value="1"/>
</dbReference>
<dbReference type="PANTHER" id="PTHR42847:SF4">
    <property type="entry name" value="ALKANESULFONATE MONOOXYGENASE-RELATED"/>
    <property type="match status" value="1"/>
</dbReference>
<dbReference type="Pfam" id="PF00296">
    <property type="entry name" value="Bac_luciferase"/>
    <property type="match status" value="1"/>
</dbReference>
<dbReference type="SUPFAM" id="SSF51679">
    <property type="entry name" value="Bacterial luciferase-like"/>
    <property type="match status" value="1"/>
</dbReference>
<feature type="chain" id="PRO_0000402624" description="Pyrimidine monooxygenase RutA">
    <location>
        <begin position="1"/>
        <end position="356"/>
    </location>
</feature>
<feature type="binding site" evidence="1">
    <location>
        <begin position="49"/>
        <end position="50"/>
    </location>
    <ligand>
        <name>FMN</name>
        <dbReference type="ChEBI" id="CHEBI:58210"/>
    </ligand>
</feature>
<feature type="binding site" evidence="1">
    <location>
        <position position="115"/>
    </location>
    <ligand>
        <name>FMN</name>
        <dbReference type="ChEBI" id="CHEBI:58210"/>
    </ligand>
</feature>
<feature type="binding site" evidence="1">
    <location>
        <position position="124"/>
    </location>
    <ligand>
        <name>FMN</name>
        <dbReference type="ChEBI" id="CHEBI:58210"/>
    </ligand>
</feature>
<feature type="binding site" evidence="1">
    <location>
        <begin position="140"/>
        <end position="141"/>
    </location>
    <ligand>
        <name>FMN</name>
        <dbReference type="ChEBI" id="CHEBI:58210"/>
    </ligand>
</feature>
<feature type="binding site" evidence="1">
    <location>
        <position position="190"/>
    </location>
    <ligand>
        <name>FMN</name>
        <dbReference type="ChEBI" id="CHEBI:58210"/>
    </ligand>
</feature>
<keyword id="KW-0285">Flavoprotein</keyword>
<keyword id="KW-0288">FMN</keyword>
<keyword id="KW-0503">Monooxygenase</keyword>
<keyword id="KW-0521">NADP</keyword>
<keyword id="KW-0560">Oxidoreductase</keyword>
<keyword id="KW-1185">Reference proteome</keyword>
<comment type="function">
    <text evidence="1">Catalyzes the pyrimidine ring opening between N-3 and C-4 by an unusual flavin hydroperoxide-catalyzed mechanism, adding oxygen atoms in the process to yield ureidoacrylate peracid, that immediately reacts with FMN forming ureidoacrylate and FMN-N(5)-oxide. The FMN-N(5)-oxide reacts spontaneously with NADH to produce FMN. Requires the flavin reductase RutF to regenerate FMN in vivo.</text>
</comment>
<comment type="catalytic activity">
    <reaction evidence="1">
        <text>uracil + FMNH2 + NADH + O2 = (Z)-3-ureidoacrylate + FMN + NAD(+) + H2O + H(+)</text>
        <dbReference type="Rhea" id="RHEA:31587"/>
        <dbReference type="ChEBI" id="CHEBI:15377"/>
        <dbReference type="ChEBI" id="CHEBI:15378"/>
        <dbReference type="ChEBI" id="CHEBI:15379"/>
        <dbReference type="ChEBI" id="CHEBI:17568"/>
        <dbReference type="ChEBI" id="CHEBI:57540"/>
        <dbReference type="ChEBI" id="CHEBI:57618"/>
        <dbReference type="ChEBI" id="CHEBI:57945"/>
        <dbReference type="ChEBI" id="CHEBI:58210"/>
        <dbReference type="ChEBI" id="CHEBI:59891"/>
        <dbReference type="EC" id="1.14.99.46"/>
    </reaction>
</comment>
<comment type="catalytic activity">
    <reaction evidence="1">
        <text>thymine + FMNH2 + NADH + O2 = (Z)-2-methylureidoacrylate + FMN + NAD(+) + H2O + H(+)</text>
        <dbReference type="Rhea" id="RHEA:31599"/>
        <dbReference type="ChEBI" id="CHEBI:15377"/>
        <dbReference type="ChEBI" id="CHEBI:15378"/>
        <dbReference type="ChEBI" id="CHEBI:15379"/>
        <dbReference type="ChEBI" id="CHEBI:17821"/>
        <dbReference type="ChEBI" id="CHEBI:57540"/>
        <dbReference type="ChEBI" id="CHEBI:57618"/>
        <dbReference type="ChEBI" id="CHEBI:57945"/>
        <dbReference type="ChEBI" id="CHEBI:58210"/>
        <dbReference type="ChEBI" id="CHEBI:143783"/>
        <dbReference type="EC" id="1.14.99.46"/>
    </reaction>
</comment>
<comment type="similarity">
    <text evidence="1">Belongs to the NtaA/SnaA/DszA monooxygenase family. RutA subfamily.</text>
</comment>
<protein>
    <recommendedName>
        <fullName evidence="1">Pyrimidine monooxygenase RutA</fullName>
        <ecNumber evidence="1">1.14.99.46</ecNumber>
    </recommendedName>
</protein>
<organism>
    <name type="scientific">Haliangium ochraceum (strain DSM 14365 / JCM 11303 / SMP-2)</name>
    <dbReference type="NCBI Taxonomy" id="502025"/>
    <lineage>
        <taxon>Bacteria</taxon>
        <taxon>Pseudomonadati</taxon>
        <taxon>Myxococcota</taxon>
        <taxon>Polyangia</taxon>
        <taxon>Haliangiales</taxon>
        <taxon>Kofleriaceae</taxon>
        <taxon>Haliangium</taxon>
    </lineage>
</organism>
<name>RUTA_HALO1</name>
<sequence length="356" mass="39362">MEVGVFIPIGNNGWLISENSPQYQPSFDLNKEIAQRAEAHGLDFLLSMIKLRGFGGKTEFWEYNLESFTLMAGLASVTERIKLFATCATLLIPPAYAARMCNTIDSISHGRFGLNLITGWQRPEYSQMGMWPGDEHFARRYDMLSEYAHILRELWEKGESSFQGEFYQMEDCRVRPQPQGDMKLICAGSSDAGLAFSAKYADYAFCLGKGVNTPTAFAGNNERLAAATAKTGRDVSIYVLMMVIAAETDDEAMDKWMHYRAGVDEEAVAWLGNQGAADKTSDTTNVRQLAARESAVNLNMGTLVGSYENIARMLDEVATVPNTGGVLLVFDDFVAGVETFGTRIQPLMKTRQHTAG</sequence>